<organism>
    <name type="scientific">Clostridium perfringens (strain SM101 / Type A)</name>
    <dbReference type="NCBI Taxonomy" id="289380"/>
    <lineage>
        <taxon>Bacteria</taxon>
        <taxon>Bacillati</taxon>
        <taxon>Bacillota</taxon>
        <taxon>Clostridia</taxon>
        <taxon>Eubacteriales</taxon>
        <taxon>Clostridiaceae</taxon>
        <taxon>Clostridium</taxon>
    </lineage>
</organism>
<comment type="function">
    <text evidence="1">Could be involved in septation.</text>
</comment>
<comment type="similarity">
    <text evidence="1">Belongs to the SpoVG family.</text>
</comment>
<reference key="1">
    <citation type="journal article" date="2006" name="Genome Res.">
        <title>Skewed genomic variability in strains of the toxigenic bacterial pathogen, Clostridium perfringens.</title>
        <authorList>
            <person name="Myers G.S.A."/>
            <person name="Rasko D.A."/>
            <person name="Cheung J.K."/>
            <person name="Ravel J."/>
            <person name="Seshadri R."/>
            <person name="DeBoy R.T."/>
            <person name="Ren Q."/>
            <person name="Varga J."/>
            <person name="Awad M.M."/>
            <person name="Brinkac L.M."/>
            <person name="Daugherty S.C."/>
            <person name="Haft D.H."/>
            <person name="Dodson R.J."/>
            <person name="Madupu R."/>
            <person name="Nelson W.C."/>
            <person name="Rosovitz M.J."/>
            <person name="Sullivan S.A."/>
            <person name="Khouri H."/>
            <person name="Dimitrov G.I."/>
            <person name="Watkins K.L."/>
            <person name="Mulligan S."/>
            <person name="Benton J."/>
            <person name="Radune D."/>
            <person name="Fisher D.J."/>
            <person name="Atkins H.S."/>
            <person name="Hiscox T."/>
            <person name="Jost B.H."/>
            <person name="Billington S.J."/>
            <person name="Songer J.G."/>
            <person name="McClane B.A."/>
            <person name="Titball R.W."/>
            <person name="Rood J.I."/>
            <person name="Melville S.B."/>
            <person name="Paulsen I.T."/>
        </authorList>
    </citation>
    <scope>NUCLEOTIDE SEQUENCE [LARGE SCALE GENOMIC DNA]</scope>
    <source>
        <strain>SM101 / Type A</strain>
    </source>
</reference>
<keyword id="KW-0131">Cell cycle</keyword>
<keyword id="KW-0132">Cell division</keyword>
<keyword id="KW-0717">Septation</keyword>
<protein>
    <recommendedName>
        <fullName evidence="1">Putative septation protein SpoVG</fullName>
    </recommendedName>
</protein>
<name>SP5G_CLOPS</name>
<feature type="chain" id="PRO_1000062431" description="Putative septation protein SpoVG">
    <location>
        <begin position="1"/>
        <end position="90"/>
    </location>
</feature>
<dbReference type="EMBL" id="CP000312">
    <property type="protein sequence ID" value="ABG86266.1"/>
    <property type="molecule type" value="Genomic_DNA"/>
</dbReference>
<dbReference type="RefSeq" id="WP_011593194.1">
    <property type="nucleotide sequence ID" value="NC_008262.1"/>
</dbReference>
<dbReference type="SMR" id="Q0SQ60"/>
<dbReference type="KEGG" id="cpr:CPR_2500"/>
<dbReference type="Proteomes" id="UP000001824">
    <property type="component" value="Chromosome"/>
</dbReference>
<dbReference type="GO" id="GO:0000917">
    <property type="term" value="P:division septum assembly"/>
    <property type="evidence" value="ECO:0007669"/>
    <property type="project" value="UniProtKB-KW"/>
</dbReference>
<dbReference type="GO" id="GO:0030435">
    <property type="term" value="P:sporulation resulting in formation of a cellular spore"/>
    <property type="evidence" value="ECO:0007669"/>
    <property type="project" value="InterPro"/>
</dbReference>
<dbReference type="Gene3D" id="3.30.1120.40">
    <property type="entry name" value="Stage V sporulation protein G"/>
    <property type="match status" value="1"/>
</dbReference>
<dbReference type="HAMAP" id="MF_00819">
    <property type="entry name" value="SpoVG"/>
    <property type="match status" value="1"/>
</dbReference>
<dbReference type="InterPro" id="IPR007170">
    <property type="entry name" value="SpoVG"/>
</dbReference>
<dbReference type="InterPro" id="IPR036751">
    <property type="entry name" value="SpoVG_sf"/>
</dbReference>
<dbReference type="NCBIfam" id="NF009749">
    <property type="entry name" value="PRK13259.1"/>
    <property type="match status" value="1"/>
</dbReference>
<dbReference type="PANTHER" id="PTHR38429">
    <property type="entry name" value="SEPTATION PROTEIN SPOVG-RELATED"/>
    <property type="match status" value="1"/>
</dbReference>
<dbReference type="PANTHER" id="PTHR38429:SF1">
    <property type="entry name" value="SEPTATION PROTEIN SPOVG-RELATED"/>
    <property type="match status" value="1"/>
</dbReference>
<dbReference type="Pfam" id="PF04026">
    <property type="entry name" value="SpoVG"/>
    <property type="match status" value="1"/>
</dbReference>
<dbReference type="SUPFAM" id="SSF160537">
    <property type="entry name" value="SpoVG-like"/>
    <property type="match status" value="1"/>
</dbReference>
<sequence length="90" mass="10331">MNITDVRIRKISAEGKMKAIVSVTFENQFVVHDIKVIEGQNGLFIAMPSRKTPDGEFKDIAHPIDTQTREQIQKAILDEYEKVKNLDMQE</sequence>
<proteinExistence type="inferred from homology"/>
<gene>
    <name evidence="1" type="primary">spoVG</name>
    <name type="ordered locus">CPR_2500</name>
</gene>
<accession>Q0SQ60</accession>
<evidence type="ECO:0000255" key="1">
    <source>
        <dbReference type="HAMAP-Rule" id="MF_00819"/>
    </source>
</evidence>